<name>DIR18_ARATH</name>
<organism>
    <name type="scientific">Arabidopsis thaliana</name>
    <name type="common">Mouse-ear cress</name>
    <dbReference type="NCBI Taxonomy" id="3702"/>
    <lineage>
        <taxon>Eukaryota</taxon>
        <taxon>Viridiplantae</taxon>
        <taxon>Streptophyta</taxon>
        <taxon>Embryophyta</taxon>
        <taxon>Tracheophyta</taxon>
        <taxon>Spermatophyta</taxon>
        <taxon>Magnoliopsida</taxon>
        <taxon>eudicotyledons</taxon>
        <taxon>Gunneridae</taxon>
        <taxon>Pentapetalae</taxon>
        <taxon>rosids</taxon>
        <taxon>malvids</taxon>
        <taxon>Brassicales</taxon>
        <taxon>Brassicaceae</taxon>
        <taxon>Camelineae</taxon>
        <taxon>Arabidopsis</taxon>
    </lineage>
</organism>
<sequence>MMKQSPFSLLTSIFLIAALFTATTALDPAPEDPIFELYMHDILGGSSPTARPITGLLGNIYNGQVPFAKQIGFVPPQNGVAIPNANGAMPTVNGINGIPLGTGLSGTAFSGQNLNGIQTQLGPDGLSLGFGTITVIDDIITSGPDLGSQPLGKAQGVYVASSADGSTQMMAFTAMLEGGEYNDNLNFYGIYRIGSAMSHLSVTGGTGRFKNACGFAEVRPLIPAGQHFVDGAEMLLRIIVHLKY</sequence>
<accession>Q9T0H8</accession>
<gene>
    <name type="primary">DIR18</name>
    <name type="ordered locus">At4g13580</name>
    <name type="ORF">T6G15.130</name>
</gene>
<reference key="1">
    <citation type="journal article" date="1999" name="Nature">
        <title>Sequence and analysis of chromosome 4 of the plant Arabidopsis thaliana.</title>
        <authorList>
            <person name="Mayer K.F.X."/>
            <person name="Schueller C."/>
            <person name="Wambutt R."/>
            <person name="Murphy G."/>
            <person name="Volckaert G."/>
            <person name="Pohl T."/>
            <person name="Duesterhoeft A."/>
            <person name="Stiekema W."/>
            <person name="Entian K.-D."/>
            <person name="Terryn N."/>
            <person name="Harris B."/>
            <person name="Ansorge W."/>
            <person name="Brandt P."/>
            <person name="Grivell L.A."/>
            <person name="Rieger M."/>
            <person name="Weichselgartner M."/>
            <person name="de Simone V."/>
            <person name="Obermaier B."/>
            <person name="Mache R."/>
            <person name="Mueller M."/>
            <person name="Kreis M."/>
            <person name="Delseny M."/>
            <person name="Puigdomenech P."/>
            <person name="Watson M."/>
            <person name="Schmidtheini T."/>
            <person name="Reichert B."/>
            <person name="Portetelle D."/>
            <person name="Perez-Alonso M."/>
            <person name="Boutry M."/>
            <person name="Bancroft I."/>
            <person name="Vos P."/>
            <person name="Hoheisel J."/>
            <person name="Zimmermann W."/>
            <person name="Wedler H."/>
            <person name="Ridley P."/>
            <person name="Langham S.-A."/>
            <person name="McCullagh B."/>
            <person name="Bilham L."/>
            <person name="Robben J."/>
            <person name="van der Schueren J."/>
            <person name="Grymonprez B."/>
            <person name="Chuang Y.-J."/>
            <person name="Vandenbussche F."/>
            <person name="Braeken M."/>
            <person name="Weltjens I."/>
            <person name="Voet M."/>
            <person name="Bastiaens I."/>
            <person name="Aert R."/>
            <person name="Defoor E."/>
            <person name="Weitzenegger T."/>
            <person name="Bothe G."/>
            <person name="Ramsperger U."/>
            <person name="Hilbert H."/>
            <person name="Braun M."/>
            <person name="Holzer E."/>
            <person name="Brandt A."/>
            <person name="Peters S."/>
            <person name="van Staveren M."/>
            <person name="Dirkse W."/>
            <person name="Mooijman P."/>
            <person name="Klein Lankhorst R."/>
            <person name="Rose M."/>
            <person name="Hauf J."/>
            <person name="Koetter P."/>
            <person name="Berneiser S."/>
            <person name="Hempel S."/>
            <person name="Feldpausch M."/>
            <person name="Lamberth S."/>
            <person name="Van den Daele H."/>
            <person name="De Keyser A."/>
            <person name="Buysshaert C."/>
            <person name="Gielen J."/>
            <person name="Villarroel R."/>
            <person name="De Clercq R."/>
            <person name="van Montagu M."/>
            <person name="Rogers J."/>
            <person name="Cronin A."/>
            <person name="Quail M.A."/>
            <person name="Bray-Allen S."/>
            <person name="Clark L."/>
            <person name="Doggett J."/>
            <person name="Hall S."/>
            <person name="Kay M."/>
            <person name="Lennard N."/>
            <person name="McLay K."/>
            <person name="Mayes R."/>
            <person name="Pettett A."/>
            <person name="Rajandream M.A."/>
            <person name="Lyne M."/>
            <person name="Benes V."/>
            <person name="Rechmann S."/>
            <person name="Borkova D."/>
            <person name="Bloecker H."/>
            <person name="Scharfe M."/>
            <person name="Grimm M."/>
            <person name="Loehnert T.-H."/>
            <person name="Dose S."/>
            <person name="de Haan M."/>
            <person name="Maarse A.C."/>
            <person name="Schaefer M."/>
            <person name="Mueller-Auer S."/>
            <person name="Gabel C."/>
            <person name="Fuchs M."/>
            <person name="Fartmann B."/>
            <person name="Granderath K."/>
            <person name="Dauner D."/>
            <person name="Herzl A."/>
            <person name="Neumann S."/>
            <person name="Argiriou A."/>
            <person name="Vitale D."/>
            <person name="Liguori R."/>
            <person name="Piravandi E."/>
            <person name="Massenet O."/>
            <person name="Quigley F."/>
            <person name="Clabauld G."/>
            <person name="Muendlein A."/>
            <person name="Felber R."/>
            <person name="Schnabl S."/>
            <person name="Hiller R."/>
            <person name="Schmidt W."/>
            <person name="Lecharny A."/>
            <person name="Aubourg S."/>
            <person name="Chefdor F."/>
            <person name="Cooke R."/>
            <person name="Berger C."/>
            <person name="Monfort A."/>
            <person name="Casacuberta E."/>
            <person name="Gibbons T."/>
            <person name="Weber N."/>
            <person name="Vandenbol M."/>
            <person name="Bargues M."/>
            <person name="Terol J."/>
            <person name="Torres A."/>
            <person name="Perez-Perez A."/>
            <person name="Purnelle B."/>
            <person name="Bent E."/>
            <person name="Johnson S."/>
            <person name="Tacon D."/>
            <person name="Jesse T."/>
            <person name="Heijnen L."/>
            <person name="Schwarz S."/>
            <person name="Scholler P."/>
            <person name="Heber S."/>
            <person name="Francs P."/>
            <person name="Bielke C."/>
            <person name="Frishman D."/>
            <person name="Haase D."/>
            <person name="Lemcke K."/>
            <person name="Mewes H.-W."/>
            <person name="Stocker S."/>
            <person name="Zaccaria P."/>
            <person name="Bevan M."/>
            <person name="Wilson R.K."/>
            <person name="de la Bastide M."/>
            <person name="Habermann K."/>
            <person name="Parnell L."/>
            <person name="Dedhia N."/>
            <person name="Gnoj L."/>
            <person name="Schutz K."/>
            <person name="Huang E."/>
            <person name="Spiegel L."/>
            <person name="Sekhon M."/>
            <person name="Murray J."/>
            <person name="Sheet P."/>
            <person name="Cordes M."/>
            <person name="Abu-Threideh J."/>
            <person name="Stoneking T."/>
            <person name="Kalicki J."/>
            <person name="Graves T."/>
            <person name="Harmon G."/>
            <person name="Edwards J."/>
            <person name="Latreille P."/>
            <person name="Courtney L."/>
            <person name="Cloud J."/>
            <person name="Abbott A."/>
            <person name="Scott K."/>
            <person name="Johnson D."/>
            <person name="Minx P."/>
            <person name="Bentley D."/>
            <person name="Fulton B."/>
            <person name="Miller N."/>
            <person name="Greco T."/>
            <person name="Kemp K."/>
            <person name="Kramer J."/>
            <person name="Fulton L."/>
            <person name="Mardis E."/>
            <person name="Dante M."/>
            <person name="Pepin K."/>
            <person name="Hillier L.W."/>
            <person name="Nelson J."/>
            <person name="Spieth J."/>
            <person name="Ryan E."/>
            <person name="Andrews S."/>
            <person name="Geisel C."/>
            <person name="Layman D."/>
            <person name="Du H."/>
            <person name="Ali J."/>
            <person name="Berghoff A."/>
            <person name="Jones K."/>
            <person name="Drone K."/>
            <person name="Cotton M."/>
            <person name="Joshu C."/>
            <person name="Antonoiu B."/>
            <person name="Zidanic M."/>
            <person name="Strong C."/>
            <person name="Sun H."/>
            <person name="Lamar B."/>
            <person name="Yordan C."/>
            <person name="Ma P."/>
            <person name="Zhong J."/>
            <person name="Preston R."/>
            <person name="Vil D."/>
            <person name="Shekher M."/>
            <person name="Matero A."/>
            <person name="Shah R."/>
            <person name="Swaby I.K."/>
            <person name="O'Shaughnessy A."/>
            <person name="Rodriguez M."/>
            <person name="Hoffman J."/>
            <person name="Till S."/>
            <person name="Granat S."/>
            <person name="Shohdy N."/>
            <person name="Hasegawa A."/>
            <person name="Hameed A."/>
            <person name="Lodhi M."/>
            <person name="Johnson A."/>
            <person name="Chen E."/>
            <person name="Marra M.A."/>
            <person name="Martienssen R."/>
            <person name="McCombie W.R."/>
        </authorList>
    </citation>
    <scope>NUCLEOTIDE SEQUENCE [LARGE SCALE GENOMIC DNA]</scope>
    <source>
        <strain>cv. Columbia</strain>
    </source>
</reference>
<reference key="2">
    <citation type="journal article" date="2017" name="Plant J.">
        <title>Araport11: a complete reannotation of the Arabidopsis thaliana reference genome.</title>
        <authorList>
            <person name="Cheng C.Y."/>
            <person name="Krishnakumar V."/>
            <person name="Chan A.P."/>
            <person name="Thibaud-Nissen F."/>
            <person name="Schobel S."/>
            <person name="Town C.D."/>
        </authorList>
    </citation>
    <scope>GENOME REANNOTATION</scope>
    <source>
        <strain>cv. Columbia</strain>
    </source>
</reference>
<reference key="3">
    <citation type="journal article" date="2003" name="Science">
        <title>Empirical analysis of transcriptional activity in the Arabidopsis genome.</title>
        <authorList>
            <person name="Yamada K."/>
            <person name="Lim J."/>
            <person name="Dale J.M."/>
            <person name="Chen H."/>
            <person name="Shinn P."/>
            <person name="Palm C.J."/>
            <person name="Southwick A.M."/>
            <person name="Wu H.C."/>
            <person name="Kim C.J."/>
            <person name="Nguyen M."/>
            <person name="Pham P.K."/>
            <person name="Cheuk R.F."/>
            <person name="Karlin-Newmann G."/>
            <person name="Liu S.X."/>
            <person name="Lam B."/>
            <person name="Sakano H."/>
            <person name="Wu T."/>
            <person name="Yu G."/>
            <person name="Miranda M."/>
            <person name="Quach H.L."/>
            <person name="Tripp M."/>
            <person name="Chang C.H."/>
            <person name="Lee J.M."/>
            <person name="Toriumi M.J."/>
            <person name="Chan M.M."/>
            <person name="Tang C.C."/>
            <person name="Onodera C.S."/>
            <person name="Deng J.M."/>
            <person name="Akiyama K."/>
            <person name="Ansari Y."/>
            <person name="Arakawa T."/>
            <person name="Banh J."/>
            <person name="Banno F."/>
            <person name="Bowser L."/>
            <person name="Brooks S.Y."/>
            <person name="Carninci P."/>
            <person name="Chao Q."/>
            <person name="Choy N."/>
            <person name="Enju A."/>
            <person name="Goldsmith A.D."/>
            <person name="Gurjal M."/>
            <person name="Hansen N.F."/>
            <person name="Hayashizaki Y."/>
            <person name="Johnson-Hopson C."/>
            <person name="Hsuan V.W."/>
            <person name="Iida K."/>
            <person name="Karnes M."/>
            <person name="Khan S."/>
            <person name="Koesema E."/>
            <person name="Ishida J."/>
            <person name="Jiang P.X."/>
            <person name="Jones T."/>
            <person name="Kawai J."/>
            <person name="Kamiya A."/>
            <person name="Meyers C."/>
            <person name="Nakajima M."/>
            <person name="Narusaka M."/>
            <person name="Seki M."/>
            <person name="Sakurai T."/>
            <person name="Satou M."/>
            <person name="Tamse R."/>
            <person name="Vaysberg M."/>
            <person name="Wallender E.K."/>
            <person name="Wong C."/>
            <person name="Yamamura Y."/>
            <person name="Yuan S."/>
            <person name="Shinozaki K."/>
            <person name="Davis R.W."/>
            <person name="Theologis A."/>
            <person name="Ecker J.R."/>
        </authorList>
    </citation>
    <scope>NUCLEOTIDE SEQUENCE [LARGE SCALE MRNA]</scope>
    <source>
        <strain>cv. Columbia</strain>
    </source>
</reference>
<reference key="4">
    <citation type="journal article" date="2007" name="Phytochemistry">
        <title>Dirigent proteins in conifer defense II: Extended gene discovery, phylogeny, and constitutive and stress-induced gene expression in spruce (Picea spp.).</title>
        <authorList>
            <person name="Ralph S.G."/>
            <person name="Jancsik S."/>
            <person name="Bohlmann J."/>
        </authorList>
    </citation>
    <scope>GENE FAMILY</scope>
    <scope>NOMENCLATURE</scope>
</reference>
<protein>
    <recommendedName>
        <fullName>Dirigent protein 18</fullName>
        <shortName>AtDIR18</shortName>
    </recommendedName>
</protein>
<comment type="function">
    <text evidence="1">Dirigent proteins impart stereoselectivity on the phenoxy radical-coupling reaction, yielding optically active lignans from two molecules of coniferyl alcohol in the biosynthesis of lignans, flavonolignans, and alkaloids and thus plays a central role in plant secondary metabolism.</text>
</comment>
<comment type="subunit">
    <text evidence="1">Homodimer.</text>
</comment>
<comment type="subcellular location">
    <subcellularLocation>
        <location evidence="1">Secreted</location>
        <location evidence="1">Extracellular space</location>
        <location evidence="1">Apoplast</location>
    </subcellularLocation>
</comment>
<comment type="similarity">
    <text evidence="3">Belongs to the plant dirigent protein family.</text>
</comment>
<proteinExistence type="evidence at transcript level"/>
<dbReference type="EMBL" id="AL049656">
    <property type="protein sequence ID" value="CAB41116.1"/>
    <property type="molecule type" value="Genomic_DNA"/>
</dbReference>
<dbReference type="EMBL" id="AL161536">
    <property type="protein sequence ID" value="CAB78400.1"/>
    <property type="molecule type" value="Genomic_DNA"/>
</dbReference>
<dbReference type="EMBL" id="CP002687">
    <property type="protein sequence ID" value="AEE83298.1"/>
    <property type="molecule type" value="Genomic_DNA"/>
</dbReference>
<dbReference type="EMBL" id="AY081267">
    <property type="protein sequence ID" value="AAL91156.1"/>
    <property type="molecule type" value="mRNA"/>
</dbReference>
<dbReference type="EMBL" id="AY114553">
    <property type="protein sequence ID" value="AAM47872.1"/>
    <property type="molecule type" value="mRNA"/>
</dbReference>
<dbReference type="PIR" id="T06660">
    <property type="entry name" value="T06660"/>
</dbReference>
<dbReference type="RefSeq" id="NP_193094.1">
    <property type="nucleotide sequence ID" value="NM_117432.3"/>
</dbReference>
<dbReference type="SMR" id="Q9T0H8"/>
<dbReference type="FunCoup" id="Q9T0H8">
    <property type="interactions" value="41"/>
</dbReference>
<dbReference type="STRING" id="3702.Q9T0H8"/>
<dbReference type="PaxDb" id="3702-AT4G13580.1"/>
<dbReference type="ProteomicsDB" id="222148"/>
<dbReference type="DNASU" id="826991"/>
<dbReference type="EnsemblPlants" id="AT4G13580.1">
    <property type="protein sequence ID" value="AT4G13580.1"/>
    <property type="gene ID" value="AT4G13580"/>
</dbReference>
<dbReference type="GeneID" id="826991"/>
<dbReference type="Gramene" id="AT4G13580.1">
    <property type="protein sequence ID" value="AT4G13580.1"/>
    <property type="gene ID" value="AT4G13580"/>
</dbReference>
<dbReference type="KEGG" id="ath:AT4G13580"/>
<dbReference type="Araport" id="AT4G13580"/>
<dbReference type="TAIR" id="AT4G13580"/>
<dbReference type="eggNOG" id="ENOG502QT90">
    <property type="taxonomic scope" value="Eukaryota"/>
</dbReference>
<dbReference type="HOGENOM" id="CLU_059816_1_0_1"/>
<dbReference type="InParanoid" id="Q9T0H8"/>
<dbReference type="OMA" id="VLEFYMH"/>
<dbReference type="PhylomeDB" id="Q9T0H8"/>
<dbReference type="PRO" id="PR:Q9T0H8"/>
<dbReference type="Proteomes" id="UP000006548">
    <property type="component" value="Chromosome 4"/>
</dbReference>
<dbReference type="ExpressionAtlas" id="Q9T0H8">
    <property type="expression patterns" value="baseline and differential"/>
</dbReference>
<dbReference type="GO" id="GO:0048046">
    <property type="term" value="C:apoplast"/>
    <property type="evidence" value="ECO:0007669"/>
    <property type="project" value="UniProtKB-SubCell"/>
</dbReference>
<dbReference type="GO" id="GO:0009699">
    <property type="term" value="P:phenylpropanoid biosynthetic process"/>
    <property type="evidence" value="ECO:0007669"/>
    <property type="project" value="UniProtKB-ARBA"/>
</dbReference>
<dbReference type="Gene3D" id="2.40.480.10">
    <property type="entry name" value="Allene oxide cyclase-like"/>
    <property type="match status" value="1"/>
</dbReference>
<dbReference type="InterPro" id="IPR044859">
    <property type="entry name" value="Allene_oxi_cyc_Dirigent"/>
</dbReference>
<dbReference type="InterPro" id="IPR004265">
    <property type="entry name" value="Dirigent"/>
</dbReference>
<dbReference type="PANTHER" id="PTHR46215:SF1">
    <property type="entry name" value="DIRIGENT PROTEIN 18"/>
    <property type="match status" value="1"/>
</dbReference>
<dbReference type="PANTHER" id="PTHR46215">
    <property type="entry name" value="DIRIGENT PROTEIN 24-RELATED"/>
    <property type="match status" value="1"/>
</dbReference>
<dbReference type="Pfam" id="PF03018">
    <property type="entry name" value="Dirigent"/>
    <property type="match status" value="1"/>
</dbReference>
<keyword id="KW-0052">Apoplast</keyword>
<keyword id="KW-1185">Reference proteome</keyword>
<keyword id="KW-0964">Secreted</keyword>
<keyword id="KW-0732">Signal</keyword>
<evidence type="ECO:0000250" key="1"/>
<evidence type="ECO:0000255" key="2"/>
<evidence type="ECO:0000305" key="3"/>
<feature type="signal peptide" evidence="2">
    <location>
        <begin position="1"/>
        <end position="25"/>
    </location>
</feature>
<feature type="chain" id="PRO_0000422849" description="Dirigent protein 18">
    <location>
        <begin position="26"/>
        <end position="244"/>
    </location>
</feature>